<organism>
    <name type="scientific">Thelephora ganbajun</name>
    <name type="common">Ganba fungus</name>
    <dbReference type="NCBI Taxonomy" id="370292"/>
    <lineage>
        <taxon>Eukaryota</taxon>
        <taxon>Fungi</taxon>
        <taxon>Dikarya</taxon>
        <taxon>Basidiomycota</taxon>
        <taxon>Agaricomycotina</taxon>
        <taxon>Agaricomycetes</taxon>
        <taxon>Thelephorales</taxon>
        <taxon>Thelephoraceae</taxon>
        <taxon>Thelephora</taxon>
    </lineage>
</organism>
<proteinExistence type="evidence at protein level"/>
<name>RNHI1_THEGA</name>
<feature type="chain" id="PRO_0000227528" description="Ribonuclease" evidence="3">
    <location>
        <begin position="1"/>
        <end position="15" status="greater than"/>
    </location>
</feature>
<feature type="non-terminal residue" evidence="2">
    <location>
        <position position="15"/>
    </location>
</feature>
<sequence length="15" mass="1581">DADIAVWAPPVNAQN</sequence>
<protein>
    <recommendedName>
        <fullName>Ribonuclease</fullName>
        <ecNumber>3.1.-.-</ecNumber>
    </recommendedName>
</protein>
<accession>P84784</accession>
<comment type="function">
    <text evidence="1">Has ribonuclease activity towards yeast tRNA and polyuracil, and decreasing ribonuclease activity towards polyadenine, polycytosine and polyguanine respectively. Lacks antifungal activity against M.arachidicola and P.piricola. Inhibits HIV-1 reverse transcriptase.</text>
</comment>
<comment type="biophysicochemical properties">
    <phDependence>
        <text evidence="1">Optimum pH is 6-7.</text>
    </phDependence>
    <temperatureDependence>
        <text evidence="1">Optimum temperature is 45 degrees Celsius. Activity decreases sharply above 50 degrees Celsius and below 40 degrees Celsius.</text>
    </temperatureDependence>
</comment>
<comment type="subunit">
    <text evidence="1">Monomer.</text>
</comment>
<comment type="miscellaneous">
    <text evidence="1">Inhibits HIV-1 reverse transcriptase with an IC(50) of 300 nM.</text>
</comment>
<evidence type="ECO:0000269" key="1">
    <source>
    </source>
</evidence>
<evidence type="ECO:0000303" key="2">
    <source>
    </source>
</evidence>
<evidence type="ECO:0000305" key="3"/>
<reference evidence="3" key="1">
    <citation type="journal article" date="2004" name="Biochem. Biophys. Res. Commun.">
        <title>Purification of a novel ribonuclease from dried fruiting bodies of the edible wild mushroom Thelephora ganbajun.</title>
        <authorList>
            <person name="Wang H.X."/>
            <person name="Ng T.B."/>
        </authorList>
    </citation>
    <scope>PROTEIN SEQUENCE</scope>
    <scope>FUNCTION</scope>
    <scope>ACTIVITY REGULATION</scope>
    <scope>BIOPHYSICOCHEMICAL PROPERTIES</scope>
    <scope>SUBUNIT</scope>
    <source>
        <tissue evidence="1">Fruiting body</tissue>
    </source>
</reference>
<dbReference type="EC" id="3.1.-.-"/>
<dbReference type="GO" id="GO:0004540">
    <property type="term" value="F:RNA nuclease activity"/>
    <property type="evidence" value="ECO:0000314"/>
    <property type="project" value="UniProtKB"/>
</dbReference>
<dbReference type="GO" id="GO:0004549">
    <property type="term" value="F:tRNA-specific ribonuclease activity"/>
    <property type="evidence" value="ECO:0000314"/>
    <property type="project" value="UniProtKB"/>
</dbReference>
<keyword id="KW-0903">Direct protein sequencing</keyword>
<keyword id="KW-0378">Hydrolase</keyword>
<keyword id="KW-0540">Nuclease</keyword>